<name>CR110_LITRO</name>
<protein>
    <recommendedName>
        <fullName evidence="4">Caerin-1.10</fullName>
    </recommendedName>
</protein>
<comment type="function">
    <text evidence="2 3">Antibacterial peptide with wide spectrum of activity.</text>
</comment>
<comment type="subcellular location">
    <subcellularLocation>
        <location evidence="2">Secreted</location>
    </subcellularLocation>
</comment>
<comment type="tissue specificity">
    <text evidence="2">Expressed by the skin dorsal glands.</text>
</comment>
<comment type="developmental stage">
    <text evidence="3">Expressed during summer.</text>
</comment>
<comment type="similarity">
    <text evidence="1">Belongs to the frog skin active peptide (FSAP) family. Caerin subfamily.</text>
</comment>
<proteinExistence type="evidence at protein level"/>
<keyword id="KW-0027">Amidation</keyword>
<keyword id="KW-0878">Amphibian defense peptide</keyword>
<keyword id="KW-0044">Antibiotic</keyword>
<keyword id="KW-0929">Antimicrobial</keyword>
<keyword id="KW-0903">Direct protein sequencing</keyword>
<keyword id="KW-0964">Secreted</keyword>
<organism>
    <name type="scientific">Litoria rothii</name>
    <name type="common">Roth's tree frog</name>
    <name type="synonym">Hyla rothii</name>
    <dbReference type="NCBI Taxonomy" id="336074"/>
    <lineage>
        <taxon>Eukaryota</taxon>
        <taxon>Metazoa</taxon>
        <taxon>Chordata</taxon>
        <taxon>Craniata</taxon>
        <taxon>Vertebrata</taxon>
        <taxon>Euteleostomi</taxon>
        <taxon>Amphibia</taxon>
        <taxon>Batrachia</taxon>
        <taxon>Anura</taxon>
        <taxon>Neobatrachia</taxon>
        <taxon>Hyloidea</taxon>
        <taxon>Hylidae</taxon>
        <taxon>Pelodryadinae</taxon>
        <taxon>Litoria</taxon>
    </lineage>
</organism>
<feature type="peptide" id="PRO_0000394431" description="Caerin-1.10" evidence="2">
    <location>
        <begin position="1"/>
        <end position="25"/>
    </location>
</feature>
<feature type="modified residue" description="Leucine amide" evidence="2">
    <location>
        <position position="25"/>
    </location>
</feature>
<evidence type="ECO:0000255" key="1"/>
<evidence type="ECO:0000269" key="2">
    <source>
    </source>
</evidence>
<evidence type="ECO:0000269" key="3">
    <source>
    </source>
</evidence>
<evidence type="ECO:0000303" key="4">
    <source>
    </source>
</evidence>
<evidence type="ECO:0000305" key="5"/>
<accession>P86502</accession>
<reference evidence="5" key="1">
    <citation type="journal article" date="2005" name="Rapid Commun. Mass Spectrom.">
        <title>The rothein peptides from the skin secretion of Roth's tree frog Litoria rothii. Sequence determination using positive and negative ion electrospray mass spectrometry.</title>
        <authorList>
            <person name="Brinkworth C.S."/>
            <person name="Bowie J.H."/>
            <person name="Bilusich D."/>
            <person name="Tyler M.J."/>
        </authorList>
    </citation>
    <scope>PROTEIN SEQUENCE</scope>
    <scope>FUNCTION</scope>
    <scope>IDENTIFICATION BY MASS SPECTROMETRY</scope>
    <scope>SUBCELLULAR LOCATION</scope>
    <scope>TISSUE SPECIFICITY</scope>
    <scope>AMIDATION AT LEU-25</scope>
    <source>
        <tissue evidence="2">Skin secretion</tissue>
    </source>
</reference>
<reference evidence="5" key="2">
    <citation type="journal article" date="2009" name="Toxicon">
        <title>Activities of seasonably variable caerulein and rothein skin peptides from the tree frogs Litoria splendida and Litoria rothii.</title>
        <authorList>
            <person name="Sherman P.J."/>
            <person name="Jackway R.J."/>
            <person name="Nicholson E."/>
            <person name="Musgrave I.F."/>
            <person name="Boontheung P."/>
            <person name="Bowie J.H."/>
        </authorList>
    </citation>
    <scope>FUNCTION</scope>
    <scope>DEVELOPMENTAL STAGE</scope>
</reference>
<dbReference type="SMR" id="P86502"/>
<dbReference type="GO" id="GO:0005576">
    <property type="term" value="C:extracellular region"/>
    <property type="evidence" value="ECO:0000314"/>
    <property type="project" value="UniProtKB"/>
</dbReference>
<dbReference type="GO" id="GO:0050829">
    <property type="term" value="P:defense response to Gram-negative bacterium"/>
    <property type="evidence" value="ECO:0000314"/>
    <property type="project" value="UniProtKB"/>
</dbReference>
<dbReference type="GO" id="GO:0050830">
    <property type="term" value="P:defense response to Gram-positive bacterium"/>
    <property type="evidence" value="ECO:0000314"/>
    <property type="project" value="UniProtKB"/>
</dbReference>
<dbReference type="InterPro" id="IPR010000">
    <property type="entry name" value="Caerin_1"/>
</dbReference>
<dbReference type="Pfam" id="PF07440">
    <property type="entry name" value="Caerin_1"/>
    <property type="match status" value="1"/>
</dbReference>
<sequence length="25" mass="2576">GLLSVLGSVAKHVLPHVVPVIAEKL</sequence>